<accession>P20489</accession>
<accession>E9QLR4</accession>
<sequence length="250" mass="28657">MVTGRSAQLCLALLFMSLDVILTATEKSVLTLDPPWIRIFTGEKVTLSCYGNNHLQMNSTTKWIHNGTVSEVNSSHLVIVSATVQDSGKYICQKQGLFKSKPVYLNVTQDWLLLQTSADMVLVHGSFDIRCHGWKNWNVRKVIYYRNDHAFNYSYESPVSIREATLNDSGTYHCKGYLRQVKYESDKFRIAVVKAYKCKYYWLQLIFPLLVAILFAVDTGLLLSTEEQFKSVLEIQKTGKYKKVETELLT</sequence>
<reference key="1">
    <citation type="journal article" date="1989" name="J. Biol. Chem.">
        <title>Complete structure of the mouse mast cell receptor for IgE (Fc epsilon RI) and surface expression of chimeric receptors (rat-mouse-human) on transfected cells.</title>
        <authorList>
            <person name="Ra C."/>
            <person name="Jouvin M.H.E."/>
            <person name="Kinet J.-P."/>
        </authorList>
    </citation>
    <scope>NUCLEOTIDE SEQUENCE [MRNA]</scope>
</reference>
<reference key="2">
    <citation type="journal article" date="2009" name="PLoS Biol.">
        <title>Lineage-specific biology revealed by a finished genome assembly of the mouse.</title>
        <authorList>
            <person name="Church D.M."/>
            <person name="Goodstadt L."/>
            <person name="Hillier L.W."/>
            <person name="Zody M.C."/>
            <person name="Goldstein S."/>
            <person name="She X."/>
            <person name="Bult C.J."/>
            <person name="Agarwala R."/>
            <person name="Cherry J.L."/>
            <person name="DiCuccio M."/>
            <person name="Hlavina W."/>
            <person name="Kapustin Y."/>
            <person name="Meric P."/>
            <person name="Maglott D."/>
            <person name="Birtle Z."/>
            <person name="Marques A.C."/>
            <person name="Graves T."/>
            <person name="Zhou S."/>
            <person name="Teague B."/>
            <person name="Potamousis K."/>
            <person name="Churas C."/>
            <person name="Place M."/>
            <person name="Herschleb J."/>
            <person name="Runnheim R."/>
            <person name="Forrest D."/>
            <person name="Amos-Landgraf J."/>
            <person name="Schwartz D.C."/>
            <person name="Cheng Z."/>
            <person name="Lindblad-Toh K."/>
            <person name="Eichler E.E."/>
            <person name="Ponting C.P."/>
        </authorList>
    </citation>
    <scope>NUCLEOTIDE SEQUENCE [LARGE SCALE GENOMIC DNA]</scope>
    <source>
        <strain>C57BL/6J</strain>
    </source>
</reference>
<reference key="3">
    <citation type="journal article" date="1991" name="Int. Arch. Allergy Appl. Immunol.">
        <title>mRNA variants encoding multiple forms of the high-affinity IgE receptor alpha subunit in transformed and nontransformed mast cells.</title>
        <authorList>
            <person name="Robertson M.W."/>
            <person name="Mehl V.S."/>
            <person name="Richards M.L."/>
            <person name="Liu F.T."/>
        </authorList>
    </citation>
    <scope>NUCLEOTIDE SEQUENCE [MRNA] OF 125-194</scope>
</reference>
<reference key="4">
    <citation type="journal article" date="2007" name="J. Biol. Chem.">
        <title>Neural adrenergic/cyclic AMP regulation of the immunoglobulin E receptor alpha-subunit expression in the mammalian pinealocyte: a neuroendocrine/immune response link?</title>
        <authorList>
            <person name="Ganguly S."/>
            <person name="Grodzki C."/>
            <person name="Sugden D."/>
            <person name="Moller M."/>
            <person name="Odom S."/>
            <person name="Gaildrat P."/>
            <person name="Gery I."/>
            <person name="Siraganian R.P."/>
            <person name="Rivera J."/>
            <person name="Klein D.C."/>
        </authorList>
    </citation>
    <scope>TISSUE SPECIFICITY</scope>
    <scope>INDUCTION</scope>
</reference>
<gene>
    <name type="primary">Fcer1a</name>
    <name type="synonym">Fce1a</name>
</gene>
<evidence type="ECO:0000250" key="1">
    <source>
        <dbReference type="UniProtKB" id="P12319"/>
    </source>
</evidence>
<evidence type="ECO:0000255" key="2"/>
<evidence type="ECO:0000255" key="3">
    <source>
        <dbReference type="PROSITE-ProRule" id="PRU00114"/>
    </source>
</evidence>
<evidence type="ECO:0000269" key="4">
    <source>
    </source>
</evidence>
<evidence type="ECO:0000305" key="5"/>
<keyword id="KW-0002">3D-structure</keyword>
<keyword id="KW-1003">Cell membrane</keyword>
<keyword id="KW-1015">Disulfide bond</keyword>
<keyword id="KW-0325">Glycoprotein</keyword>
<keyword id="KW-0389">IgE-binding protein</keyword>
<keyword id="KW-0393">Immunoglobulin domain</keyword>
<keyword id="KW-0472">Membrane</keyword>
<keyword id="KW-0675">Receptor</keyword>
<keyword id="KW-1185">Reference proteome</keyword>
<keyword id="KW-0677">Repeat</keyword>
<keyword id="KW-0732">Signal</keyword>
<keyword id="KW-0812">Transmembrane</keyword>
<keyword id="KW-1133">Transmembrane helix</keyword>
<comment type="function">
    <text evidence="1">High-affinity receptor for immunoglobulin epsilon/IgE. Mediates IgE effector functions in myeloid cells. Upon IgE binding and antigen/allergen cross-linking initiates signaling pathways that lead to myeloid cell activation and differentiation. On mast cells, basophils and eosinophils stimulates the secretion of vasoactive amines, lipid mediators and cytokines that contribute to inflammatory response, tissue remodeling and cytotoxicity against microbes. Triggers the immediate hypersensitivity response to allergens as a host defense mechanism against helminth parasites, pathogenic bacteria and venom toxicity. When dysregulated, it can elicit harmful life-threatening allergic and anaphylactic reactions.</text>
</comment>
<comment type="subunit">
    <text evidence="1">Tetramer of an alpha chain, a beta chain, and two disulfide linked gamma chains. Interacts with IGHE (via CH3 region).</text>
</comment>
<comment type="subcellular location">
    <subcellularLocation>
        <location evidence="1">Cell membrane</location>
        <topology evidence="1">Single-pass type I membrane protein</topology>
    </subcellularLocation>
</comment>
<comment type="tissue specificity">
    <text evidence="4">Expressed in bone marrow mast cells, as well as in the pineal gland at night.</text>
</comment>
<comment type="induction">
    <text evidence="4">Exhibits night/day variations with an increased expression at night in the pineal gland.</text>
</comment>
<feature type="signal peptide">
    <location>
        <begin position="1"/>
        <end position="23"/>
    </location>
</feature>
<feature type="chain" id="PRO_0000015162" description="High affinity immunoglobulin epsilon receptor subunit alpha">
    <location>
        <begin position="24"/>
        <end position="250"/>
    </location>
</feature>
<feature type="topological domain" description="Extracellular" evidence="2">
    <location>
        <begin position="24"/>
        <end position="204"/>
    </location>
</feature>
<feature type="transmembrane region" description="Helical" evidence="2">
    <location>
        <begin position="205"/>
        <end position="223"/>
    </location>
</feature>
<feature type="topological domain" description="Cytoplasmic" evidence="2">
    <location>
        <begin position="224"/>
        <end position="250"/>
    </location>
</feature>
<feature type="domain" description="Ig-like 1">
    <location>
        <begin position="28"/>
        <end position="104"/>
    </location>
</feature>
<feature type="domain" description="Ig-like 2">
    <location>
        <begin position="114"/>
        <end position="181"/>
    </location>
</feature>
<feature type="glycosylation site" description="N-linked (GlcNAc...) asparagine" evidence="2">
    <location>
        <position position="58"/>
    </location>
</feature>
<feature type="glycosylation site" description="N-linked (GlcNAc...) asparagine" evidence="2">
    <location>
        <position position="66"/>
    </location>
</feature>
<feature type="glycosylation site" description="N-linked (GlcNAc...) asparagine" evidence="2">
    <location>
        <position position="73"/>
    </location>
</feature>
<feature type="glycosylation site" description="N-linked (GlcNAc...) asparagine" evidence="2">
    <location>
        <position position="106"/>
    </location>
</feature>
<feature type="glycosylation site" description="N-linked (GlcNAc...) asparagine" evidence="2">
    <location>
        <position position="152"/>
    </location>
</feature>
<feature type="glycosylation site" description="N-linked (GlcNAc...) asparagine" evidence="2">
    <location>
        <position position="167"/>
    </location>
</feature>
<feature type="disulfide bond" evidence="3">
    <location>
        <begin position="49"/>
        <end position="92"/>
    </location>
</feature>
<feature type="disulfide bond" evidence="3">
    <location>
        <begin position="131"/>
        <end position="174"/>
    </location>
</feature>
<feature type="sequence conflict" description="In Ref. 1; AAA37600." evidence="5" ref="1">
    <original>V</original>
    <variation>I</variation>
    <location>
        <position position="121"/>
    </location>
</feature>
<feature type="sequence conflict" description="In Ref. 1; AAA37600." evidence="5" ref="1">
    <original>K</original>
    <variation>E</variation>
    <location>
        <position position="182"/>
    </location>
</feature>
<proteinExistence type="evidence at protein level"/>
<organism>
    <name type="scientific">Mus musculus</name>
    <name type="common">Mouse</name>
    <dbReference type="NCBI Taxonomy" id="10090"/>
    <lineage>
        <taxon>Eukaryota</taxon>
        <taxon>Metazoa</taxon>
        <taxon>Chordata</taxon>
        <taxon>Craniata</taxon>
        <taxon>Vertebrata</taxon>
        <taxon>Euteleostomi</taxon>
        <taxon>Mammalia</taxon>
        <taxon>Eutheria</taxon>
        <taxon>Euarchontoglires</taxon>
        <taxon>Glires</taxon>
        <taxon>Rodentia</taxon>
        <taxon>Myomorpha</taxon>
        <taxon>Muroidea</taxon>
        <taxon>Muridae</taxon>
        <taxon>Murinae</taxon>
        <taxon>Mus</taxon>
        <taxon>Mus</taxon>
    </lineage>
</organism>
<dbReference type="EMBL" id="J05018">
    <property type="protein sequence ID" value="AAA37600.1"/>
    <property type="molecule type" value="mRNA"/>
</dbReference>
<dbReference type="EMBL" id="AC125268">
    <property type="status" value="NOT_ANNOTATED_CDS"/>
    <property type="molecule type" value="Genomic_DNA"/>
</dbReference>
<dbReference type="CCDS" id="CCDS35788.1"/>
<dbReference type="PIR" id="A34342">
    <property type="entry name" value="A34342"/>
</dbReference>
<dbReference type="RefSeq" id="NP_034314.2">
    <property type="nucleotide sequence ID" value="NM_010184.2"/>
</dbReference>
<dbReference type="PDB" id="8K7T">
    <property type="method" value="EM"/>
    <property type="resolution" value="3.71 A"/>
    <property type="chains" value="A=1-250"/>
</dbReference>
<dbReference type="PDB" id="8YRJ">
    <property type="method" value="EM"/>
    <property type="resolution" value="3.87 A"/>
    <property type="chains" value="A=1-250"/>
</dbReference>
<dbReference type="PDBsum" id="8K7T"/>
<dbReference type="PDBsum" id="8YRJ"/>
<dbReference type="EMDB" id="EMD-36941"/>
<dbReference type="EMDB" id="EMD-39543"/>
<dbReference type="SMR" id="P20489"/>
<dbReference type="FunCoup" id="P20489">
    <property type="interactions" value="392"/>
</dbReference>
<dbReference type="STRING" id="10090.ENSMUSP00000056882"/>
<dbReference type="GlyCosmos" id="P20489">
    <property type="glycosylation" value="6 sites, No reported glycans"/>
</dbReference>
<dbReference type="GlyGen" id="P20489">
    <property type="glycosylation" value="6 sites"/>
</dbReference>
<dbReference type="iPTMnet" id="P20489"/>
<dbReference type="PhosphoSitePlus" id="P20489"/>
<dbReference type="PaxDb" id="10090-ENSMUSP00000056882"/>
<dbReference type="ABCD" id="P20489">
    <property type="antibodies" value="18 sequenced antibodies"/>
</dbReference>
<dbReference type="Antibodypedia" id="20472">
    <property type="antibodies" value="762 antibodies from 38 providers"/>
</dbReference>
<dbReference type="DNASU" id="14125"/>
<dbReference type="Ensembl" id="ENSMUST00000049706.11">
    <property type="protein sequence ID" value="ENSMUSP00000056882.6"/>
    <property type="gene ID" value="ENSMUSG00000005339.11"/>
</dbReference>
<dbReference type="GeneID" id="14125"/>
<dbReference type="KEGG" id="mmu:14125"/>
<dbReference type="UCSC" id="uc007dre.2">
    <property type="organism name" value="mouse"/>
</dbReference>
<dbReference type="AGR" id="MGI:95494"/>
<dbReference type="CTD" id="2205"/>
<dbReference type="MGI" id="MGI:95494">
    <property type="gene designation" value="Fcer1a"/>
</dbReference>
<dbReference type="VEuPathDB" id="HostDB:ENSMUSG00000005339"/>
<dbReference type="eggNOG" id="ENOG502RTXR">
    <property type="taxonomic scope" value="Eukaryota"/>
</dbReference>
<dbReference type="GeneTree" id="ENSGT01050000244808"/>
<dbReference type="InParanoid" id="P20489"/>
<dbReference type="OMA" id="LIRCHSW"/>
<dbReference type="OrthoDB" id="8954737at2759"/>
<dbReference type="PhylomeDB" id="P20489"/>
<dbReference type="TreeFam" id="TF335097"/>
<dbReference type="Reactome" id="R-MMU-2454202">
    <property type="pathway name" value="Fc epsilon receptor (FCERI) signaling"/>
</dbReference>
<dbReference type="Reactome" id="R-MMU-2730905">
    <property type="pathway name" value="Role of LAT2/NTAL/LAB on calcium mobilization"/>
</dbReference>
<dbReference type="Reactome" id="R-MMU-2871796">
    <property type="pathway name" value="FCERI mediated MAPK activation"/>
</dbReference>
<dbReference type="Reactome" id="R-MMU-2871809">
    <property type="pathway name" value="FCERI mediated Ca+2 mobilization"/>
</dbReference>
<dbReference type="Reactome" id="R-MMU-2871837">
    <property type="pathway name" value="FCERI mediated NF-kB activation"/>
</dbReference>
<dbReference type="BioGRID-ORCS" id="14125">
    <property type="hits" value="2 hits in 80 CRISPR screens"/>
</dbReference>
<dbReference type="PRO" id="PR:P20489"/>
<dbReference type="Proteomes" id="UP000000589">
    <property type="component" value="Chromosome 1"/>
</dbReference>
<dbReference type="RNAct" id="P20489">
    <property type="molecule type" value="protein"/>
</dbReference>
<dbReference type="Bgee" id="ENSMUSG00000005339">
    <property type="expression patterns" value="Expressed in granulocyte and 23 other cell types or tissues"/>
</dbReference>
<dbReference type="ExpressionAtlas" id="P20489">
    <property type="expression patterns" value="baseline and differential"/>
</dbReference>
<dbReference type="GO" id="GO:0009897">
    <property type="term" value="C:external side of plasma membrane"/>
    <property type="evidence" value="ECO:0000314"/>
    <property type="project" value="MGI"/>
</dbReference>
<dbReference type="GO" id="GO:0045121">
    <property type="term" value="C:membrane raft"/>
    <property type="evidence" value="ECO:0000304"/>
    <property type="project" value="MGI"/>
</dbReference>
<dbReference type="GO" id="GO:0005886">
    <property type="term" value="C:plasma membrane"/>
    <property type="evidence" value="ECO:0000314"/>
    <property type="project" value="MGI"/>
</dbReference>
<dbReference type="GO" id="GO:0019863">
    <property type="term" value="F:IgE binding"/>
    <property type="evidence" value="ECO:0000314"/>
    <property type="project" value="MGI"/>
</dbReference>
<dbReference type="GO" id="GO:0019767">
    <property type="term" value="F:IgE receptor activity"/>
    <property type="evidence" value="ECO:0000314"/>
    <property type="project" value="MGI"/>
</dbReference>
<dbReference type="GO" id="GO:0019722">
    <property type="term" value="P:calcium-mediated signaling"/>
    <property type="evidence" value="ECO:0000314"/>
    <property type="project" value="MGI"/>
</dbReference>
<dbReference type="GO" id="GO:0007166">
    <property type="term" value="P:cell surface receptor signaling pathway"/>
    <property type="evidence" value="ECO:0000314"/>
    <property type="project" value="MGI"/>
</dbReference>
<dbReference type="GO" id="GO:0051649">
    <property type="term" value="P:establishment of localization in cell"/>
    <property type="evidence" value="ECO:0000314"/>
    <property type="project" value="MGI"/>
</dbReference>
<dbReference type="GO" id="GO:0019370">
    <property type="term" value="P:leukotriene biosynthetic process"/>
    <property type="evidence" value="ECO:0000314"/>
    <property type="project" value="MGI"/>
</dbReference>
<dbReference type="GO" id="GO:0043303">
    <property type="term" value="P:mast cell degranulation"/>
    <property type="evidence" value="ECO:0000314"/>
    <property type="project" value="MGI"/>
</dbReference>
<dbReference type="GO" id="GO:0050850">
    <property type="term" value="P:positive regulation of calcium-mediated signaling"/>
    <property type="evidence" value="ECO:0000314"/>
    <property type="project" value="MGI"/>
</dbReference>
<dbReference type="GO" id="GO:0032725">
    <property type="term" value="P:positive regulation of granulocyte macrophage colony-stimulating factor production"/>
    <property type="evidence" value="ECO:0000314"/>
    <property type="project" value="MGI"/>
</dbReference>
<dbReference type="GO" id="GO:0032752">
    <property type="term" value="P:positive regulation of interleukin-3 production"/>
    <property type="evidence" value="ECO:0000314"/>
    <property type="project" value="MGI"/>
</dbReference>
<dbReference type="GO" id="GO:0032765">
    <property type="term" value="P:positive regulation of mast cell cytokine production"/>
    <property type="evidence" value="ECO:0000314"/>
    <property type="project" value="MGI"/>
</dbReference>
<dbReference type="GO" id="GO:0043306">
    <property type="term" value="P:positive regulation of mast cell degranulation"/>
    <property type="evidence" value="ECO:0000314"/>
    <property type="project" value="MGI"/>
</dbReference>
<dbReference type="GO" id="GO:0001812">
    <property type="term" value="P:positive regulation of type I hypersensitivity"/>
    <property type="evidence" value="ECO:0000315"/>
    <property type="project" value="MGI"/>
</dbReference>
<dbReference type="GO" id="GO:0001820">
    <property type="term" value="P:serotonin secretion"/>
    <property type="evidence" value="ECO:0000314"/>
    <property type="project" value="MGI"/>
</dbReference>
<dbReference type="GO" id="GO:0007165">
    <property type="term" value="P:signal transduction"/>
    <property type="evidence" value="ECO:0000314"/>
    <property type="project" value="MGI"/>
</dbReference>
<dbReference type="FunFam" id="2.60.40.10:FF:000217">
    <property type="entry name" value="High affinity immunoglobulin gamma Fc receptor I"/>
    <property type="match status" value="1"/>
</dbReference>
<dbReference type="FunFam" id="2.60.40.10:FF:000356">
    <property type="entry name" value="Low affinity immunoglobulin gamma Fc region receptor III-A"/>
    <property type="match status" value="1"/>
</dbReference>
<dbReference type="Gene3D" id="2.60.40.10">
    <property type="entry name" value="Immunoglobulins"/>
    <property type="match status" value="2"/>
</dbReference>
<dbReference type="InterPro" id="IPR007110">
    <property type="entry name" value="Ig-like_dom"/>
</dbReference>
<dbReference type="InterPro" id="IPR036179">
    <property type="entry name" value="Ig-like_dom_sf"/>
</dbReference>
<dbReference type="InterPro" id="IPR013783">
    <property type="entry name" value="Ig-like_fold"/>
</dbReference>
<dbReference type="InterPro" id="IPR050488">
    <property type="entry name" value="Ig_Fc_receptor"/>
</dbReference>
<dbReference type="InterPro" id="IPR003599">
    <property type="entry name" value="Ig_sub"/>
</dbReference>
<dbReference type="PANTHER" id="PTHR11481:SF12">
    <property type="entry name" value="HIGH AFFINITY IMMUNOGLOBULIN EPSILON RECEPTOR SUBUNIT ALPHA"/>
    <property type="match status" value="1"/>
</dbReference>
<dbReference type="PANTHER" id="PTHR11481">
    <property type="entry name" value="IMMUNOGLOBULIN FC RECEPTOR"/>
    <property type="match status" value="1"/>
</dbReference>
<dbReference type="Pfam" id="PF13895">
    <property type="entry name" value="Ig_2"/>
    <property type="match status" value="2"/>
</dbReference>
<dbReference type="SMART" id="SM00409">
    <property type="entry name" value="IG"/>
    <property type="match status" value="2"/>
</dbReference>
<dbReference type="SUPFAM" id="SSF48726">
    <property type="entry name" value="Immunoglobulin"/>
    <property type="match status" value="2"/>
</dbReference>
<dbReference type="PROSITE" id="PS50835">
    <property type="entry name" value="IG_LIKE"/>
    <property type="match status" value="1"/>
</dbReference>
<name>FCERA_MOUSE</name>
<protein>
    <recommendedName>
        <fullName>High affinity immunoglobulin epsilon receptor subunit alpha</fullName>
    </recommendedName>
    <alternativeName>
        <fullName>Fc-epsilon RI-alpha</fullName>
        <shortName>FcERI</shortName>
    </alternativeName>
    <alternativeName>
        <fullName>IgE Fc receptor subunit alpha</fullName>
    </alternativeName>
</protein>